<name>MATRX_MOKV</name>
<reference key="1">
    <citation type="journal article" date="1997" name="J. Gen. Virol.">
        <title>The complete Mokola virus genome sequence: structure of the RNA-dependent RNA polymerase.</title>
        <authorList>
            <person name="Le Mercier P."/>
            <person name="Jacob Y."/>
            <person name="Tordo N."/>
        </authorList>
    </citation>
    <scope>NUCLEOTIDE SEQUENCE [GENOMIC RNA]</scope>
</reference>
<reference key="2">
    <citation type="journal article" date="2004" name="J. Virol.">
        <title>Lyssavirus matrix protein induces apoptosis by a TRAIL-dependent mechanism involving caspase-8 activation.</title>
        <authorList>
            <person name="Kassis R."/>
            <person name="Larrous F."/>
            <person name="Estaquier J."/>
            <person name="Bourhy H."/>
        </authorList>
    </citation>
    <scope>APOPTOSIS</scope>
</reference>
<organism>
    <name type="scientific">Mokola virus</name>
    <name type="common">MOKV</name>
    <dbReference type="NCBI Taxonomy" id="12538"/>
    <lineage>
        <taxon>Viruses</taxon>
        <taxon>Riboviria</taxon>
        <taxon>Orthornavirae</taxon>
        <taxon>Negarnaviricota</taxon>
        <taxon>Haploviricotina</taxon>
        <taxon>Monjiviricetes</taxon>
        <taxon>Mononegavirales</taxon>
        <taxon>Rhabdoviridae</taxon>
        <taxon>Alpharhabdovirinae</taxon>
        <taxon>Lyssavirus</taxon>
    </lineage>
</organism>
<protein>
    <recommendedName>
        <fullName>Matrix protein</fullName>
    </recommendedName>
    <alternativeName>
        <fullName>Phosphoprotein M2</fullName>
    </alternativeName>
</protein>
<gene>
    <name type="primary">M</name>
</gene>
<organismHost>
    <name type="scientific">Canis lupus familiaris</name>
    <name type="common">Dog</name>
    <name type="synonym">Canis familiaris</name>
    <dbReference type="NCBI Taxonomy" id="9615"/>
</organismHost>
<organismHost>
    <name type="scientific">Chodsigoa caovansunga</name>
    <name type="common">Van Sung's shrew</name>
    <dbReference type="NCBI Taxonomy" id="269271"/>
</organismHost>
<organismHost>
    <name type="scientific">Felis catus</name>
    <name type="common">Cat</name>
    <name type="synonym">Felis silvestris catus</name>
    <dbReference type="NCBI Taxonomy" id="9685"/>
</organismHost>
<organismHost>
    <name type="scientific">Rodentia</name>
    <dbReference type="NCBI Taxonomy" id="9989"/>
</organismHost>
<proteinExistence type="inferred from homology"/>
<accession>P0C571</accession>
<comment type="function">
    <text evidence="1">Plays a major role in assembly and budding of virion. Completely covers the ribonucleoprotein coil and keep it in condensed bullet-shaped form. Inhibits viral transcription and stimulates replication. Plays a major role in early induction of TRAIL-mediated apoptosis in infected neurons (By similarity).</text>
</comment>
<comment type="subunit">
    <text evidence="1">Homomultimer. Interacts with nucleoprotein and with the cytoplasmic domain of glycoprotein (By similarity).</text>
</comment>
<comment type="subcellular location">
    <subcellularLocation>
        <location>Virion membrane</location>
        <topology>Peripheral membrane protein</topology>
    </subcellularLocation>
    <subcellularLocation>
        <location evidence="1">Host endomembrane system</location>
        <topology evidence="1">Peripheral membrane protein</topology>
    </subcellularLocation>
</comment>
<comment type="domain">
    <text evidence="3">Late-budding domains (L domains) are short sequence motifs essential for viral particle budding. They recruit proteins of the host ESCRT machinery (Endosomal Sorting Complex Required for Transport) or ESCRT-associated proteins. Matrix protein contains one L domain: a PPXY motif which potentially interacts with the WW domain 3 of NEDD4 E3 ubiquitin ligase (Potential).</text>
</comment>
<comment type="miscellaneous">
    <text evidence="1">Most abundant protein in the virion.</text>
</comment>
<comment type="similarity">
    <text evidence="3">Belongs to the lyssavirus matrix protein family.</text>
</comment>
<keyword id="KW-1043">Host membrane</keyword>
<keyword id="KW-0945">Host-virus interaction</keyword>
<keyword id="KW-0472">Membrane</keyword>
<keyword id="KW-0597">Phosphoprotein</keyword>
<keyword id="KW-1185">Reference proteome</keyword>
<keyword id="KW-1198">Viral budding</keyword>
<keyword id="KW-1187">Viral budding via the host ESCRT complexes</keyword>
<keyword id="KW-0261">Viral envelope protein</keyword>
<keyword id="KW-0468">Viral matrix protein</keyword>
<keyword id="KW-1188">Viral release from host cell</keyword>
<keyword id="KW-0946">Virion</keyword>
<sequence>MNFLKKMIKSCKDEETQKYPSASAPPDDDDIWMPPPEYVPLTQVKGKASVRNFCISGEVKICSPNGYSFKILRHILKSFDNVYSGNRRMIGLVKVVIGLVLSGSPVPEGMNWVYKLRRTLIFQWAESHGPLEGEELEYSQEITWDDEAEFVGLQIRVSARQCHIQGRLWCINMNSRACQLWADMILQTQQSPDDENTSLLLE</sequence>
<evidence type="ECO:0000250" key="1"/>
<evidence type="ECO:0000255" key="2"/>
<evidence type="ECO:0000305" key="3"/>
<dbReference type="EMBL" id="Y09762">
    <property type="status" value="NOT_ANNOTATED_CDS"/>
    <property type="molecule type" value="Genomic_RNA"/>
</dbReference>
<dbReference type="RefSeq" id="YP_142352.1">
    <property type="nucleotide sequence ID" value="NC_006429.1"/>
</dbReference>
<dbReference type="SMR" id="P0C571"/>
<dbReference type="GeneID" id="3159475"/>
<dbReference type="KEGG" id="vg:3159475"/>
<dbReference type="OrthoDB" id="9130at10239"/>
<dbReference type="Proteomes" id="UP000006826">
    <property type="component" value="Segment"/>
</dbReference>
<dbReference type="GO" id="GO:0033645">
    <property type="term" value="C:host cell endomembrane system"/>
    <property type="evidence" value="ECO:0007669"/>
    <property type="project" value="UniProtKB-SubCell"/>
</dbReference>
<dbReference type="GO" id="GO:0016020">
    <property type="term" value="C:membrane"/>
    <property type="evidence" value="ECO:0007669"/>
    <property type="project" value="UniProtKB-KW"/>
</dbReference>
<dbReference type="GO" id="GO:0019031">
    <property type="term" value="C:viral envelope"/>
    <property type="evidence" value="ECO:0007669"/>
    <property type="project" value="UniProtKB-KW"/>
</dbReference>
<dbReference type="GO" id="GO:0055036">
    <property type="term" value="C:virion membrane"/>
    <property type="evidence" value="ECO:0007669"/>
    <property type="project" value="UniProtKB-SubCell"/>
</dbReference>
<dbReference type="GO" id="GO:0039660">
    <property type="term" value="F:structural constituent of virion"/>
    <property type="evidence" value="ECO:0007669"/>
    <property type="project" value="UniProtKB-KW"/>
</dbReference>
<dbReference type="GO" id="GO:0039702">
    <property type="term" value="P:viral budding via host ESCRT complex"/>
    <property type="evidence" value="ECO:0007669"/>
    <property type="project" value="UniProtKB-KW"/>
</dbReference>
<dbReference type="Gene3D" id="3.10.460.20">
    <property type="entry name" value="Rhabdovirus matrix protein M2"/>
    <property type="match status" value="1"/>
</dbReference>
<dbReference type="InterPro" id="IPR006870">
    <property type="entry name" value="Rhabdo_M"/>
</dbReference>
<dbReference type="InterPro" id="IPR038617">
    <property type="entry name" value="Rhabdovirus_M_sf"/>
</dbReference>
<dbReference type="Pfam" id="PF04785">
    <property type="entry name" value="Rhabdo_M2"/>
    <property type="match status" value="1"/>
</dbReference>
<feature type="chain" id="PRO_0000295572" description="Matrix protein">
    <location>
        <begin position="1"/>
        <end position="202"/>
    </location>
</feature>
<feature type="region of interest" description="Essential for glycoprotein binding" evidence="1">
    <location>
        <begin position="115"/>
        <end position="151"/>
    </location>
</feature>
<feature type="short sequence motif" description="PPXY motif" evidence="2">
    <location>
        <begin position="35"/>
        <end position="38"/>
    </location>
</feature>